<dbReference type="EC" id="7.6.2.7" evidence="1"/>
<dbReference type="EMBL" id="CT573326">
    <property type="protein sequence ID" value="CAK13180.1"/>
    <property type="molecule type" value="Genomic_DNA"/>
</dbReference>
<dbReference type="RefSeq" id="WP_011531641.1">
    <property type="nucleotide sequence ID" value="NC_008027.1"/>
</dbReference>
<dbReference type="SMR" id="Q1IGM2"/>
<dbReference type="STRING" id="384676.PSEEN0212"/>
<dbReference type="GeneID" id="32803560"/>
<dbReference type="KEGG" id="pen:PSEEN0212"/>
<dbReference type="eggNOG" id="COG4525">
    <property type="taxonomic scope" value="Bacteria"/>
</dbReference>
<dbReference type="HOGENOM" id="CLU_000604_1_22_6"/>
<dbReference type="OrthoDB" id="9802264at2"/>
<dbReference type="Proteomes" id="UP000000658">
    <property type="component" value="Chromosome"/>
</dbReference>
<dbReference type="GO" id="GO:0005886">
    <property type="term" value="C:plasma membrane"/>
    <property type="evidence" value="ECO:0007669"/>
    <property type="project" value="UniProtKB-SubCell"/>
</dbReference>
<dbReference type="GO" id="GO:0015411">
    <property type="term" value="F:ABC-type taurine transporter transporter activity"/>
    <property type="evidence" value="ECO:0007669"/>
    <property type="project" value="UniProtKB-EC"/>
</dbReference>
<dbReference type="GO" id="GO:0005524">
    <property type="term" value="F:ATP binding"/>
    <property type="evidence" value="ECO:0007669"/>
    <property type="project" value="UniProtKB-KW"/>
</dbReference>
<dbReference type="GO" id="GO:0016887">
    <property type="term" value="F:ATP hydrolysis activity"/>
    <property type="evidence" value="ECO:0007669"/>
    <property type="project" value="InterPro"/>
</dbReference>
<dbReference type="CDD" id="cd03293">
    <property type="entry name" value="ABC_NrtD_SsuB_transporters"/>
    <property type="match status" value="1"/>
</dbReference>
<dbReference type="Gene3D" id="3.40.50.300">
    <property type="entry name" value="P-loop containing nucleotide triphosphate hydrolases"/>
    <property type="match status" value="1"/>
</dbReference>
<dbReference type="InterPro" id="IPR003593">
    <property type="entry name" value="AAA+_ATPase"/>
</dbReference>
<dbReference type="InterPro" id="IPR003439">
    <property type="entry name" value="ABC_transporter-like_ATP-bd"/>
</dbReference>
<dbReference type="InterPro" id="IPR017871">
    <property type="entry name" value="ABC_transporter-like_CS"/>
</dbReference>
<dbReference type="InterPro" id="IPR050166">
    <property type="entry name" value="ABC_transporter_ATP-bind"/>
</dbReference>
<dbReference type="InterPro" id="IPR027417">
    <property type="entry name" value="P-loop_NTPase"/>
</dbReference>
<dbReference type="NCBIfam" id="NF008421">
    <property type="entry name" value="PRK11248.1"/>
    <property type="match status" value="1"/>
</dbReference>
<dbReference type="PANTHER" id="PTHR42788:SF18">
    <property type="entry name" value="TAURINE IMPORT ATP-BINDING PROTEIN TAUB"/>
    <property type="match status" value="1"/>
</dbReference>
<dbReference type="PANTHER" id="PTHR42788">
    <property type="entry name" value="TAURINE IMPORT ATP-BINDING PROTEIN-RELATED"/>
    <property type="match status" value="1"/>
</dbReference>
<dbReference type="Pfam" id="PF00005">
    <property type="entry name" value="ABC_tran"/>
    <property type="match status" value="1"/>
</dbReference>
<dbReference type="SMART" id="SM00382">
    <property type="entry name" value="AAA"/>
    <property type="match status" value="1"/>
</dbReference>
<dbReference type="SUPFAM" id="SSF52540">
    <property type="entry name" value="P-loop containing nucleoside triphosphate hydrolases"/>
    <property type="match status" value="1"/>
</dbReference>
<dbReference type="PROSITE" id="PS00211">
    <property type="entry name" value="ABC_TRANSPORTER_1"/>
    <property type="match status" value="1"/>
</dbReference>
<dbReference type="PROSITE" id="PS50893">
    <property type="entry name" value="ABC_TRANSPORTER_2"/>
    <property type="match status" value="1"/>
</dbReference>
<dbReference type="PROSITE" id="PS51250">
    <property type="entry name" value="TAUB"/>
    <property type="match status" value="1"/>
</dbReference>
<organism>
    <name type="scientific">Pseudomonas entomophila (strain L48)</name>
    <dbReference type="NCBI Taxonomy" id="384676"/>
    <lineage>
        <taxon>Bacteria</taxon>
        <taxon>Pseudomonadati</taxon>
        <taxon>Pseudomonadota</taxon>
        <taxon>Gammaproteobacteria</taxon>
        <taxon>Pseudomonadales</taxon>
        <taxon>Pseudomonadaceae</taxon>
        <taxon>Pseudomonas</taxon>
    </lineage>
</organism>
<keyword id="KW-0067">ATP-binding</keyword>
<keyword id="KW-0997">Cell inner membrane</keyword>
<keyword id="KW-1003">Cell membrane</keyword>
<keyword id="KW-0472">Membrane</keyword>
<keyword id="KW-0547">Nucleotide-binding</keyword>
<keyword id="KW-1278">Translocase</keyword>
<keyword id="KW-0813">Transport</keyword>
<accession>Q1IGM2</accession>
<comment type="function">
    <text evidence="1">Part of the ABC transporter complex TauABC involved in taurine import. Responsible for energy coupling to the transport system.</text>
</comment>
<comment type="catalytic activity">
    <reaction evidence="1">
        <text>taurine(out) + ATP + H2O = taurine(in) + ADP + phosphate + H(+)</text>
        <dbReference type="Rhea" id="RHEA:14613"/>
        <dbReference type="ChEBI" id="CHEBI:15377"/>
        <dbReference type="ChEBI" id="CHEBI:15378"/>
        <dbReference type="ChEBI" id="CHEBI:30616"/>
        <dbReference type="ChEBI" id="CHEBI:43474"/>
        <dbReference type="ChEBI" id="CHEBI:456216"/>
        <dbReference type="ChEBI" id="CHEBI:507393"/>
        <dbReference type="EC" id="7.6.2.7"/>
    </reaction>
</comment>
<comment type="subunit">
    <text evidence="1">The complex is composed of two ATP-binding proteins (TauB), two transmembrane proteins (TauC) and a solute-binding protein (TauA).</text>
</comment>
<comment type="subcellular location">
    <subcellularLocation>
        <location evidence="1">Cell inner membrane</location>
        <topology evidence="1">Peripheral membrane protein</topology>
    </subcellularLocation>
</comment>
<comment type="similarity">
    <text evidence="1">Belongs to the ABC transporter superfamily. Taurine importer (TC 3.A.1.17.1) family.</text>
</comment>
<feature type="chain" id="PRO_0000275834" description="Taurine import ATP-binding protein TauB">
    <location>
        <begin position="1"/>
        <end position="259"/>
    </location>
</feature>
<feature type="domain" description="ABC transporter" evidence="1">
    <location>
        <begin position="4"/>
        <end position="233"/>
    </location>
</feature>
<feature type="binding site" evidence="1">
    <location>
        <begin position="38"/>
        <end position="45"/>
    </location>
    <ligand>
        <name>ATP</name>
        <dbReference type="ChEBI" id="CHEBI:30616"/>
    </ligand>
</feature>
<proteinExistence type="inferred from homology"/>
<protein>
    <recommendedName>
        <fullName evidence="1">Taurine import ATP-binding protein TauB</fullName>
        <ecNumber evidence="1">7.6.2.7</ecNumber>
    </recommendedName>
</protein>
<reference key="1">
    <citation type="journal article" date="2006" name="Nat. Biotechnol.">
        <title>Complete genome sequence of the entomopathogenic and metabolically versatile soil bacterium Pseudomonas entomophila.</title>
        <authorList>
            <person name="Vodovar N."/>
            <person name="Vallenet D."/>
            <person name="Cruveiller S."/>
            <person name="Rouy Z."/>
            <person name="Barbe V."/>
            <person name="Acosta C."/>
            <person name="Cattolico L."/>
            <person name="Jubin C."/>
            <person name="Lajus A."/>
            <person name="Segurens B."/>
            <person name="Vacherie B."/>
            <person name="Wincker P."/>
            <person name="Weissenbach J."/>
            <person name="Lemaitre B."/>
            <person name="Medigue C."/>
            <person name="Boccard F."/>
        </authorList>
    </citation>
    <scope>NUCLEOTIDE SEQUENCE [LARGE SCALE GENOMIC DNA]</scope>
    <source>
        <strain>L48</strain>
    </source>
</reference>
<sequence length="259" mass="28092">MALLELERISAQYPGASTPVLADINLSLGPRQLLVALGPSGSGKTSLLNLIAGFVAPSGGRITLDGAPVQGPGAERGVVFQDDALLPWQDVLANVAFGLELAGVPRAQREAKAREMLALVDLAGFAERRIWQLSGGQKQRVGLARALAADPRVLLMDEPFGALDAFTREQMQELLLQVWQRTAKPVFLITHDIEEAVFLATELVLLAPNPGRVVERLQLDFGQRYAAGESARAIKSDPRFIETREHVLARVFSQRQESA</sequence>
<evidence type="ECO:0000255" key="1">
    <source>
        <dbReference type="HAMAP-Rule" id="MF_01714"/>
    </source>
</evidence>
<gene>
    <name evidence="1" type="primary">tauB</name>
    <name type="ordered locus">PSEEN0212</name>
</gene>
<name>TAUB_PSEE4</name>